<organism>
    <name type="scientific">Shewanella sp. (strain MR-7)</name>
    <dbReference type="NCBI Taxonomy" id="60481"/>
    <lineage>
        <taxon>Bacteria</taxon>
        <taxon>Pseudomonadati</taxon>
        <taxon>Pseudomonadota</taxon>
        <taxon>Gammaproteobacteria</taxon>
        <taxon>Alteromonadales</taxon>
        <taxon>Shewanellaceae</taxon>
        <taxon>Shewanella</taxon>
    </lineage>
</organism>
<dbReference type="EC" id="6.1.1.5" evidence="1"/>
<dbReference type="EMBL" id="CP000444">
    <property type="protein sequence ID" value="ABI44023.1"/>
    <property type="molecule type" value="Genomic_DNA"/>
</dbReference>
<dbReference type="SMR" id="Q0HS82"/>
<dbReference type="KEGG" id="shm:Shewmr7_3039"/>
<dbReference type="HOGENOM" id="CLU_001493_7_1_6"/>
<dbReference type="GO" id="GO:0005829">
    <property type="term" value="C:cytosol"/>
    <property type="evidence" value="ECO:0007669"/>
    <property type="project" value="TreeGrafter"/>
</dbReference>
<dbReference type="GO" id="GO:0002161">
    <property type="term" value="F:aminoacyl-tRNA deacylase activity"/>
    <property type="evidence" value="ECO:0007669"/>
    <property type="project" value="InterPro"/>
</dbReference>
<dbReference type="GO" id="GO:0005524">
    <property type="term" value="F:ATP binding"/>
    <property type="evidence" value="ECO:0007669"/>
    <property type="project" value="UniProtKB-UniRule"/>
</dbReference>
<dbReference type="GO" id="GO:0004822">
    <property type="term" value="F:isoleucine-tRNA ligase activity"/>
    <property type="evidence" value="ECO:0007669"/>
    <property type="project" value="UniProtKB-UniRule"/>
</dbReference>
<dbReference type="GO" id="GO:0000049">
    <property type="term" value="F:tRNA binding"/>
    <property type="evidence" value="ECO:0007669"/>
    <property type="project" value="InterPro"/>
</dbReference>
<dbReference type="GO" id="GO:0008270">
    <property type="term" value="F:zinc ion binding"/>
    <property type="evidence" value="ECO:0007669"/>
    <property type="project" value="UniProtKB-UniRule"/>
</dbReference>
<dbReference type="GO" id="GO:0006428">
    <property type="term" value="P:isoleucyl-tRNA aminoacylation"/>
    <property type="evidence" value="ECO:0007669"/>
    <property type="project" value="UniProtKB-UniRule"/>
</dbReference>
<dbReference type="CDD" id="cd07960">
    <property type="entry name" value="Anticodon_Ia_Ile_BEm"/>
    <property type="match status" value="1"/>
</dbReference>
<dbReference type="CDD" id="cd00818">
    <property type="entry name" value="IleRS_core"/>
    <property type="match status" value="1"/>
</dbReference>
<dbReference type="FunFam" id="1.10.730.20:FF:000001">
    <property type="entry name" value="Isoleucine--tRNA ligase"/>
    <property type="match status" value="1"/>
</dbReference>
<dbReference type="FunFam" id="3.40.50.620:FF:000042">
    <property type="entry name" value="Isoleucine--tRNA ligase"/>
    <property type="match status" value="1"/>
</dbReference>
<dbReference type="FunFam" id="3.40.50.620:FF:000048">
    <property type="entry name" value="Isoleucine--tRNA ligase"/>
    <property type="match status" value="1"/>
</dbReference>
<dbReference type="Gene3D" id="1.10.730.20">
    <property type="match status" value="1"/>
</dbReference>
<dbReference type="Gene3D" id="3.40.50.620">
    <property type="entry name" value="HUPs"/>
    <property type="match status" value="2"/>
</dbReference>
<dbReference type="HAMAP" id="MF_02002">
    <property type="entry name" value="Ile_tRNA_synth_type1"/>
    <property type="match status" value="1"/>
</dbReference>
<dbReference type="InterPro" id="IPR001412">
    <property type="entry name" value="aa-tRNA-synth_I_CS"/>
</dbReference>
<dbReference type="InterPro" id="IPR002300">
    <property type="entry name" value="aa-tRNA-synth_Ia"/>
</dbReference>
<dbReference type="InterPro" id="IPR033708">
    <property type="entry name" value="Anticodon_Ile_BEm"/>
</dbReference>
<dbReference type="InterPro" id="IPR002301">
    <property type="entry name" value="Ile-tRNA-ligase"/>
</dbReference>
<dbReference type="InterPro" id="IPR023585">
    <property type="entry name" value="Ile-tRNA-ligase_type1"/>
</dbReference>
<dbReference type="InterPro" id="IPR050081">
    <property type="entry name" value="Ile-tRNA_ligase"/>
</dbReference>
<dbReference type="InterPro" id="IPR013155">
    <property type="entry name" value="M/V/L/I-tRNA-synth_anticd-bd"/>
</dbReference>
<dbReference type="InterPro" id="IPR014729">
    <property type="entry name" value="Rossmann-like_a/b/a_fold"/>
</dbReference>
<dbReference type="InterPro" id="IPR009080">
    <property type="entry name" value="tRNAsynth_Ia_anticodon-bd"/>
</dbReference>
<dbReference type="InterPro" id="IPR009008">
    <property type="entry name" value="Val/Leu/Ile-tRNA-synth_edit"/>
</dbReference>
<dbReference type="InterPro" id="IPR010663">
    <property type="entry name" value="Znf_FPG/IleRS"/>
</dbReference>
<dbReference type="NCBIfam" id="TIGR00392">
    <property type="entry name" value="ileS"/>
    <property type="match status" value="1"/>
</dbReference>
<dbReference type="PANTHER" id="PTHR42765:SF1">
    <property type="entry name" value="ISOLEUCINE--TRNA LIGASE, MITOCHONDRIAL"/>
    <property type="match status" value="1"/>
</dbReference>
<dbReference type="PANTHER" id="PTHR42765">
    <property type="entry name" value="SOLEUCYL-TRNA SYNTHETASE"/>
    <property type="match status" value="1"/>
</dbReference>
<dbReference type="Pfam" id="PF08264">
    <property type="entry name" value="Anticodon_1"/>
    <property type="match status" value="1"/>
</dbReference>
<dbReference type="Pfam" id="PF00133">
    <property type="entry name" value="tRNA-synt_1"/>
    <property type="match status" value="1"/>
</dbReference>
<dbReference type="Pfam" id="PF06827">
    <property type="entry name" value="zf-FPG_IleRS"/>
    <property type="match status" value="1"/>
</dbReference>
<dbReference type="PRINTS" id="PR00984">
    <property type="entry name" value="TRNASYNTHILE"/>
</dbReference>
<dbReference type="SUPFAM" id="SSF47323">
    <property type="entry name" value="Anticodon-binding domain of a subclass of class I aminoacyl-tRNA synthetases"/>
    <property type="match status" value="1"/>
</dbReference>
<dbReference type="SUPFAM" id="SSF52374">
    <property type="entry name" value="Nucleotidylyl transferase"/>
    <property type="match status" value="1"/>
</dbReference>
<dbReference type="SUPFAM" id="SSF50677">
    <property type="entry name" value="ValRS/IleRS/LeuRS editing domain"/>
    <property type="match status" value="1"/>
</dbReference>
<dbReference type="PROSITE" id="PS00178">
    <property type="entry name" value="AA_TRNA_LIGASE_I"/>
    <property type="match status" value="1"/>
</dbReference>
<keyword id="KW-0030">Aminoacyl-tRNA synthetase</keyword>
<keyword id="KW-0067">ATP-binding</keyword>
<keyword id="KW-0963">Cytoplasm</keyword>
<keyword id="KW-0436">Ligase</keyword>
<keyword id="KW-0479">Metal-binding</keyword>
<keyword id="KW-0547">Nucleotide-binding</keyword>
<keyword id="KW-0648">Protein biosynthesis</keyword>
<keyword id="KW-0862">Zinc</keyword>
<sequence length="940" mass="105623">MSDYKFTLNLPETEFPMRGNLANREPEMLERWTKDGLYQQIRDSRIGRTPFILHDGPPYANGSIHIGHSVNKILKDIIVKSKTMSGFDAPYVPGWDCHGLPIELKVEQKVGKPGQKISAAEFREECRKYAAEQVDGQRADFIRLGVLGDWQKPYLTMDFATEANIVRSLSKVIENGHLHKGVKPVHWCTDCGSALAEAEVEYEDKTSPAIDVAFTATDSKALAAQFGVSDYSHPVAMVIWTTTPWTLPANRALSISPELDYSLVEFVKDGATHAVILADVLVEACMTRYGAESHNVLGKVKGAALELVRFKHPFLAFDVPAILGDHVTTDAGTGVVHTAPGHGQDDFVVGQKYGLEVANPVGDNGVYKPDTEFFAGQHVFKANDNVVALLKEKGALLHHVAYRHSYPHCWRHKTPIIFRATPQWFISMDNQNLRKQALSEIEQTQWIPDWGQSRIEKMVENRPDWCISRQRTWGVPITLFVHRETEELHPDSVSLMARVANRIEQEGIQAWWDLDAAELLGEEAEQYRKVTDTLDVWYDSGSTFASVVGARPEFHGHGVDLYLEGSDQHRGWFMSSLMISTAMTGKAPYKQVLTHGFTVDGKGRKMSKSIGNVIAPQQVTNKLGADILRLWVAATDYSGEMTVSDEILNRSADAYRRIRNTARFLLANLNGFDPAKDLVAVEDMVALDRWAVRRAAALQQEIIEAYEQYNFHIVTQKLMQFCSVELGSFYLDIIKDRQYTAKQEGHARRSCQSALFHIAEAMVRWIAPILSFTADEVWQLLPGQRDAYVFTQEWYQDLQSITLDTDLSDAYWDNLLTVRNEVNKVIEQARRDKRIGGSLEAEVTLFADAALTEQLTHIGDELRFVLLTSEAKVLPLADATSDAVETELASLKLVVNATTAEKCERCWHHREEVGTIEAHPTLCHRCVTNIEGDGEVRLFA</sequence>
<gene>
    <name evidence="1" type="primary">ileS</name>
    <name type="ordered locus">Shewmr7_3039</name>
</gene>
<feature type="chain" id="PRO_1000022122" description="Isoleucine--tRNA ligase">
    <location>
        <begin position="1"/>
        <end position="940"/>
    </location>
</feature>
<feature type="short sequence motif" description="'HIGH' region">
    <location>
        <begin position="58"/>
        <end position="68"/>
    </location>
</feature>
<feature type="short sequence motif" description="'KMSKS' region">
    <location>
        <begin position="605"/>
        <end position="609"/>
    </location>
</feature>
<feature type="binding site" evidence="1">
    <location>
        <position position="564"/>
    </location>
    <ligand>
        <name>L-isoleucyl-5'-AMP</name>
        <dbReference type="ChEBI" id="CHEBI:178002"/>
    </ligand>
</feature>
<feature type="binding site" evidence="1">
    <location>
        <position position="608"/>
    </location>
    <ligand>
        <name>ATP</name>
        <dbReference type="ChEBI" id="CHEBI:30616"/>
    </ligand>
</feature>
<feature type="binding site" evidence="1">
    <location>
        <position position="903"/>
    </location>
    <ligand>
        <name>Zn(2+)</name>
        <dbReference type="ChEBI" id="CHEBI:29105"/>
    </ligand>
</feature>
<feature type="binding site" evidence="1">
    <location>
        <position position="906"/>
    </location>
    <ligand>
        <name>Zn(2+)</name>
        <dbReference type="ChEBI" id="CHEBI:29105"/>
    </ligand>
</feature>
<feature type="binding site" evidence="1">
    <location>
        <position position="923"/>
    </location>
    <ligand>
        <name>Zn(2+)</name>
        <dbReference type="ChEBI" id="CHEBI:29105"/>
    </ligand>
</feature>
<feature type="binding site" evidence="1">
    <location>
        <position position="926"/>
    </location>
    <ligand>
        <name>Zn(2+)</name>
        <dbReference type="ChEBI" id="CHEBI:29105"/>
    </ligand>
</feature>
<evidence type="ECO:0000255" key="1">
    <source>
        <dbReference type="HAMAP-Rule" id="MF_02002"/>
    </source>
</evidence>
<name>SYI_SHESR</name>
<accession>Q0HS82</accession>
<proteinExistence type="inferred from homology"/>
<reference key="1">
    <citation type="submission" date="2006-08" db="EMBL/GenBank/DDBJ databases">
        <title>Complete sequence of chromosome 1 of Shewanella sp. MR-7.</title>
        <authorList>
            <person name="Copeland A."/>
            <person name="Lucas S."/>
            <person name="Lapidus A."/>
            <person name="Barry K."/>
            <person name="Detter J.C."/>
            <person name="Glavina del Rio T."/>
            <person name="Hammon N."/>
            <person name="Israni S."/>
            <person name="Dalin E."/>
            <person name="Tice H."/>
            <person name="Pitluck S."/>
            <person name="Kiss H."/>
            <person name="Brettin T."/>
            <person name="Bruce D."/>
            <person name="Han C."/>
            <person name="Tapia R."/>
            <person name="Gilna P."/>
            <person name="Schmutz J."/>
            <person name="Larimer F."/>
            <person name="Land M."/>
            <person name="Hauser L."/>
            <person name="Kyrpides N."/>
            <person name="Mikhailova N."/>
            <person name="Nealson K."/>
            <person name="Konstantinidis K."/>
            <person name="Klappenbach J."/>
            <person name="Tiedje J."/>
            <person name="Richardson P."/>
        </authorList>
    </citation>
    <scope>NUCLEOTIDE SEQUENCE [LARGE SCALE GENOMIC DNA]</scope>
    <source>
        <strain>MR-7</strain>
    </source>
</reference>
<protein>
    <recommendedName>
        <fullName evidence="1">Isoleucine--tRNA ligase</fullName>
        <ecNumber evidence="1">6.1.1.5</ecNumber>
    </recommendedName>
    <alternativeName>
        <fullName evidence="1">Isoleucyl-tRNA synthetase</fullName>
        <shortName evidence="1">IleRS</shortName>
    </alternativeName>
</protein>
<comment type="function">
    <text evidence="1">Catalyzes the attachment of isoleucine to tRNA(Ile). As IleRS can inadvertently accommodate and process structurally similar amino acids such as valine, to avoid such errors it has two additional distinct tRNA(Ile)-dependent editing activities. One activity is designated as 'pretransfer' editing and involves the hydrolysis of activated Val-AMP. The other activity is designated 'posttransfer' editing and involves deacylation of mischarged Val-tRNA(Ile).</text>
</comment>
<comment type="catalytic activity">
    <reaction evidence="1">
        <text>tRNA(Ile) + L-isoleucine + ATP = L-isoleucyl-tRNA(Ile) + AMP + diphosphate</text>
        <dbReference type="Rhea" id="RHEA:11060"/>
        <dbReference type="Rhea" id="RHEA-COMP:9666"/>
        <dbReference type="Rhea" id="RHEA-COMP:9695"/>
        <dbReference type="ChEBI" id="CHEBI:30616"/>
        <dbReference type="ChEBI" id="CHEBI:33019"/>
        <dbReference type="ChEBI" id="CHEBI:58045"/>
        <dbReference type="ChEBI" id="CHEBI:78442"/>
        <dbReference type="ChEBI" id="CHEBI:78528"/>
        <dbReference type="ChEBI" id="CHEBI:456215"/>
        <dbReference type="EC" id="6.1.1.5"/>
    </reaction>
</comment>
<comment type="cofactor">
    <cofactor evidence="1">
        <name>Zn(2+)</name>
        <dbReference type="ChEBI" id="CHEBI:29105"/>
    </cofactor>
    <text evidence="1">Binds 1 zinc ion per subunit.</text>
</comment>
<comment type="subunit">
    <text evidence="1">Monomer.</text>
</comment>
<comment type="subcellular location">
    <subcellularLocation>
        <location evidence="1">Cytoplasm</location>
    </subcellularLocation>
</comment>
<comment type="domain">
    <text evidence="1">IleRS has two distinct active sites: one for aminoacylation and one for editing. The misactivated valine is translocated from the active site to the editing site, which sterically excludes the correctly activated isoleucine. The single editing site contains two valyl binding pockets, one specific for each substrate (Val-AMP or Val-tRNA(Ile)).</text>
</comment>
<comment type="similarity">
    <text evidence="1">Belongs to the class-I aminoacyl-tRNA synthetase family. IleS type 1 subfamily.</text>
</comment>